<protein>
    <recommendedName>
        <fullName>Histone H3.3</fullName>
    </recommendedName>
    <alternativeName>
        <fullName>H3.3A/B</fullName>
    </alternativeName>
    <alternativeName>
        <fullName>Histone H3 class II</fullName>
    </alternativeName>
</protein>
<organism>
    <name type="scientific">Gallus gallus</name>
    <name type="common">Chicken</name>
    <dbReference type="NCBI Taxonomy" id="9031"/>
    <lineage>
        <taxon>Eukaryota</taxon>
        <taxon>Metazoa</taxon>
        <taxon>Chordata</taxon>
        <taxon>Craniata</taxon>
        <taxon>Vertebrata</taxon>
        <taxon>Euteleostomi</taxon>
        <taxon>Archelosauria</taxon>
        <taxon>Archosauria</taxon>
        <taxon>Dinosauria</taxon>
        <taxon>Saurischia</taxon>
        <taxon>Theropoda</taxon>
        <taxon>Coelurosauria</taxon>
        <taxon>Aves</taxon>
        <taxon>Neognathae</taxon>
        <taxon>Galloanserae</taxon>
        <taxon>Galliformes</taxon>
        <taxon>Phasianidae</taxon>
        <taxon>Phasianinae</taxon>
        <taxon>Gallus</taxon>
    </lineage>
</organism>
<accession>P84247</accession>
<accession>P06351</accession>
<accession>P33155</accession>
<accession>Q9V3W4</accession>
<gene>
    <name type="primary">H3-IX</name>
</gene>
<gene>
    <name type="primary">H3-X</name>
</gene>
<evidence type="ECO:0000250" key="1">
    <source>
        <dbReference type="UniProtKB" id="P68431"/>
    </source>
</evidence>
<evidence type="ECO:0000250" key="2">
    <source>
        <dbReference type="UniProtKB" id="P68433"/>
    </source>
</evidence>
<evidence type="ECO:0000250" key="3">
    <source>
        <dbReference type="UniProtKB" id="P84243"/>
    </source>
</evidence>
<evidence type="ECO:0000250" key="4">
    <source>
        <dbReference type="UniProtKB" id="P84244"/>
    </source>
</evidence>
<evidence type="ECO:0000250" key="5">
    <source>
        <dbReference type="UniProtKB" id="P84245"/>
    </source>
</evidence>
<evidence type="ECO:0000256" key="6">
    <source>
        <dbReference type="SAM" id="MobiDB-lite"/>
    </source>
</evidence>
<evidence type="ECO:0000305" key="7"/>
<evidence type="ECO:0007829" key="8">
    <source>
        <dbReference type="PDB" id="1PDQ"/>
    </source>
</evidence>
<dbReference type="EMBL" id="M11393">
    <property type="protein sequence ID" value="AAA48794.1"/>
    <property type="molecule type" value="Genomic_DNA"/>
</dbReference>
<dbReference type="EMBL" id="Y00392">
    <property type="protein sequence ID" value="CAA68458.1"/>
    <property type="molecule type" value="mRNA"/>
</dbReference>
<dbReference type="PIR" id="I50245">
    <property type="entry name" value="I50245"/>
</dbReference>
<dbReference type="RefSeq" id="NP_990627.1">
    <property type="nucleotide sequence ID" value="NM_205296.1"/>
</dbReference>
<dbReference type="PDB" id="1PDQ">
    <property type="method" value="X-ray"/>
    <property type="resolution" value="1.76 A"/>
    <property type="chains" value="B=16-33"/>
</dbReference>
<dbReference type="PDBsum" id="1PDQ"/>
<dbReference type="EMDB" id="EMD-0323"/>
<dbReference type="SMR" id="P84247"/>
<dbReference type="BioGRID" id="687084">
    <property type="interactions" value="7"/>
</dbReference>
<dbReference type="FunCoup" id="P84247">
    <property type="interactions" value="2744"/>
</dbReference>
<dbReference type="STRING" id="9031.ENSGALP00000031320"/>
<dbReference type="PaxDb" id="9031-ENSGALP00000031320"/>
<dbReference type="Ensembl" id="ENSGALT00010019662.1">
    <property type="protein sequence ID" value="ENSGALP00010011211.1"/>
    <property type="gene ID" value="ENSGALG00010008224.1"/>
</dbReference>
<dbReference type="Ensembl" id="ENSGALT00010042395.1">
    <property type="protein sequence ID" value="ENSGALP00010024885.1"/>
    <property type="gene ID" value="ENSGALG00010017538.1"/>
</dbReference>
<dbReference type="Ensembl" id="ENSGALT00010072060.1">
    <property type="protein sequence ID" value="ENSGALP00010044750.1"/>
    <property type="gene ID" value="ENSGALG00010029787.1"/>
</dbReference>
<dbReference type="GeneID" id="396233"/>
<dbReference type="KEGG" id="gga:396233"/>
<dbReference type="KEGG" id="gga:427887"/>
<dbReference type="CTD" id="3020"/>
<dbReference type="CTD" id="3021"/>
<dbReference type="VEuPathDB" id="HostDB:geneid_396233"/>
<dbReference type="VEuPathDB" id="HostDB:geneid_427887"/>
<dbReference type="VEuPathDB" id="HostDB:LOC100859629"/>
<dbReference type="eggNOG" id="KOG1745">
    <property type="taxonomic scope" value="Eukaryota"/>
</dbReference>
<dbReference type="GeneTree" id="ENSGT01110000267215"/>
<dbReference type="GeneTree" id="ENSGT01130000278271"/>
<dbReference type="HOGENOM" id="CLU_078295_4_0_1"/>
<dbReference type="InParanoid" id="P84247"/>
<dbReference type="OMA" id="HIFAEMA"/>
<dbReference type="OrthoDB" id="6268231at2759"/>
<dbReference type="PhylomeDB" id="P84247"/>
<dbReference type="TreeFam" id="TF314241"/>
<dbReference type="Reactome" id="R-GGA-201722">
    <property type="pathway name" value="Formation of the beta-catenin:TCF transactivating complex"/>
</dbReference>
<dbReference type="Reactome" id="R-GGA-212300">
    <property type="pathway name" value="PRC2 methylates histones and DNA"/>
</dbReference>
<dbReference type="Reactome" id="R-GGA-2559580">
    <property type="pathway name" value="Oxidative Stress Induced Senescence"/>
</dbReference>
<dbReference type="Reactome" id="R-GGA-5250924">
    <property type="pathway name" value="B-WICH complex positively regulates rRNA expression"/>
</dbReference>
<dbReference type="Reactome" id="R-GGA-5578749">
    <property type="pathway name" value="Transcriptional regulation by small RNAs"/>
</dbReference>
<dbReference type="Reactome" id="R-GGA-5625886">
    <property type="pathway name" value="Activated PKN1 stimulates transcription of AR (androgen receptor) regulated genes KLK2 and KLK3"/>
</dbReference>
<dbReference type="Reactome" id="R-GGA-68616">
    <property type="pathway name" value="Assembly of the ORC complex at the origin of replication"/>
</dbReference>
<dbReference type="Reactome" id="R-GGA-73728">
    <property type="pathway name" value="RNA Polymerase I Promoter Opening"/>
</dbReference>
<dbReference type="Reactome" id="R-GGA-73772">
    <property type="pathway name" value="RNA Polymerase I Promoter Escape"/>
</dbReference>
<dbReference type="Reactome" id="R-GGA-8936459">
    <property type="pathway name" value="RUNX1 regulates genes involved in megakaryocyte differentiation and platelet function"/>
</dbReference>
<dbReference type="Reactome" id="R-GGA-9018519">
    <property type="pathway name" value="Estrogen-dependent gene expression"/>
</dbReference>
<dbReference type="Reactome" id="R-GGA-983231">
    <property type="pathway name" value="Factors involved in megakaryocyte development and platelet production"/>
</dbReference>
<dbReference type="Reactome" id="R-GGA-9841922">
    <property type="pathway name" value="MLL4 and MLL3 complexes regulate expression of PPARG target genes in adipogenesis and hepatic steatosis"/>
</dbReference>
<dbReference type="Reactome" id="R-GGA-9843940">
    <property type="pathway name" value="Regulation of endogenous retroelements by KRAB-ZFP proteins"/>
</dbReference>
<dbReference type="Reactome" id="R-GGA-9843970">
    <property type="pathway name" value="Regulation of endogenous retroelements by the Human Silencing Hub (HUSH) complex"/>
</dbReference>
<dbReference type="PRO" id="PR:P84247"/>
<dbReference type="Proteomes" id="UP000000539">
    <property type="component" value="Chromosome 18"/>
</dbReference>
<dbReference type="Proteomes" id="UP000000539">
    <property type="component" value="Chromosome 3"/>
</dbReference>
<dbReference type="Proteomes" id="UP000000539">
    <property type="component" value="Chromosome 38"/>
</dbReference>
<dbReference type="Bgee" id="ENSGALG00000002286">
    <property type="expression patterns" value="Expressed in granulocyte and 12 other cell types or tissues"/>
</dbReference>
<dbReference type="GO" id="GO:0000786">
    <property type="term" value="C:nucleosome"/>
    <property type="evidence" value="ECO:0007669"/>
    <property type="project" value="UniProtKB-KW"/>
</dbReference>
<dbReference type="GO" id="GO:0005634">
    <property type="term" value="C:nucleus"/>
    <property type="evidence" value="ECO:0000318"/>
    <property type="project" value="GO_Central"/>
</dbReference>
<dbReference type="GO" id="GO:0003677">
    <property type="term" value="F:DNA binding"/>
    <property type="evidence" value="ECO:0007669"/>
    <property type="project" value="UniProtKB-KW"/>
</dbReference>
<dbReference type="GO" id="GO:0046982">
    <property type="term" value="F:protein heterodimerization activity"/>
    <property type="evidence" value="ECO:0007669"/>
    <property type="project" value="InterPro"/>
</dbReference>
<dbReference type="GO" id="GO:0030527">
    <property type="term" value="F:structural constituent of chromatin"/>
    <property type="evidence" value="ECO:0007669"/>
    <property type="project" value="InterPro"/>
</dbReference>
<dbReference type="CDD" id="cd22911">
    <property type="entry name" value="HFD_H3"/>
    <property type="match status" value="1"/>
</dbReference>
<dbReference type="FunFam" id="1.10.20.10:FF:000078">
    <property type="entry name" value="Histone H3"/>
    <property type="match status" value="1"/>
</dbReference>
<dbReference type="FunFam" id="1.10.20.10:FF:000044">
    <property type="entry name" value="Histone H3.3"/>
    <property type="match status" value="1"/>
</dbReference>
<dbReference type="Gene3D" id="1.10.20.10">
    <property type="entry name" value="Histone, subunit A"/>
    <property type="match status" value="1"/>
</dbReference>
<dbReference type="InterPro" id="IPR009072">
    <property type="entry name" value="Histone-fold"/>
</dbReference>
<dbReference type="InterPro" id="IPR007125">
    <property type="entry name" value="Histone_H2A/H2B/H3"/>
</dbReference>
<dbReference type="InterPro" id="IPR000164">
    <property type="entry name" value="Histone_H3/CENP-A"/>
</dbReference>
<dbReference type="PANTHER" id="PTHR11426">
    <property type="entry name" value="HISTONE H3"/>
    <property type="match status" value="1"/>
</dbReference>
<dbReference type="Pfam" id="PF00125">
    <property type="entry name" value="Histone"/>
    <property type="match status" value="1"/>
</dbReference>
<dbReference type="PRINTS" id="PR00622">
    <property type="entry name" value="HISTONEH3"/>
</dbReference>
<dbReference type="SMART" id="SM00428">
    <property type="entry name" value="H3"/>
    <property type="match status" value="1"/>
</dbReference>
<dbReference type="SUPFAM" id="SSF47113">
    <property type="entry name" value="Histone-fold"/>
    <property type="match status" value="1"/>
</dbReference>
<dbReference type="PROSITE" id="PS00322">
    <property type="entry name" value="HISTONE_H3_1"/>
    <property type="match status" value="1"/>
</dbReference>
<dbReference type="PROSITE" id="PS00959">
    <property type="entry name" value="HISTONE_H3_2"/>
    <property type="match status" value="1"/>
</dbReference>
<reference key="1">
    <citation type="journal article" date="1985" name="Mol. Cell. Biol.">
        <title>Replacement variant histone genes contain intervening sequences.</title>
        <authorList>
            <person name="Brush D."/>
            <person name="Dodgson J.B."/>
            <person name="Choi O.-R."/>
            <person name="Stevens P.W."/>
            <person name="Engel J.D."/>
        </authorList>
    </citation>
    <scope>NUCLEOTIDE SEQUENCE [GENOMIC DNA]</scope>
</reference>
<reference key="2">
    <citation type="journal article" date="1987" name="Nucleic Acids Res.">
        <title>Chicken histone H3.3B cDNA sequence confirms unusual 3' UTR structure.</title>
        <authorList>
            <person name="Dodgson J.B."/>
            <person name="Yamamoto M."/>
            <person name="Engel J.D."/>
        </authorList>
    </citation>
    <scope>NUCLEOTIDE SEQUENCE [MRNA]</scope>
    <source>
        <strain>White leghorn</strain>
        <tissue>Liver</tissue>
    </source>
</reference>
<proteinExistence type="evidence at protein level"/>
<keyword id="KW-0002">3D-structure</keyword>
<keyword id="KW-0007">Acetylation</keyword>
<keyword id="KW-0013">ADP-ribosylation</keyword>
<keyword id="KW-0158">Chromosome</keyword>
<keyword id="KW-0238">DNA-binding</keyword>
<keyword id="KW-0379">Hydroxylation</keyword>
<keyword id="KW-0488">Methylation</keyword>
<keyword id="KW-0544">Nucleosome core</keyword>
<keyword id="KW-0539">Nucleus</keyword>
<keyword id="KW-0597">Phosphoprotein</keyword>
<keyword id="KW-1185">Reference proteome</keyword>
<keyword id="KW-0832">Ubl conjugation</keyword>
<sequence length="136" mass="15328">MARTKQTARKSTGGKAPRKQLATKAARKSAPSTGGVKKPHRYRPGTVALREIRRYQKSTELLIRKLPFQRLVREIAQDFKTDLRFQSAAIGALQEASEAYLVGLFEDTNLCAIHAKRVTIMPKDIQLARRIRGERA</sequence>
<comment type="function">
    <text evidence="3">Variant histone H3 which replaces conventional H3 in a wide range of nucleosomes in active genes. Constitutes the predominant form of histone H3 in non-dividing cells and is incorporated into chromatin independently of DNA synthesis. Deposited at sites of nucleosomal displacement throughout transcribed genes, suggesting that it represents an epigenetic imprint of transcriptionally active chromatin. Nucleosomes wrap and compact DNA into chromatin, limiting DNA accessibility to the cellular machineries which require DNA as a template. Histones thereby play a central role in transcription regulation, DNA repair, DNA replication and chromosomal stability. DNA accessibility is regulated via a complex set of post-translational modifications of histones, also called histone code, and nucleosome remodeling.</text>
</comment>
<comment type="subunit">
    <text evidence="3">The nucleosome is a histone octamer containing two molecules each of H2A, H2B, H3 and H4 assembled in one H3-H4 heterotetramer and two H2A-H2B heterodimers. The octamer wraps approximately 147 bp of DNA. Interacts with zmynd11; when trimethylated at 'Lys-36' (H3.3K36me3).</text>
</comment>
<comment type="subcellular location">
    <subcellularLocation>
        <location>Nucleus</location>
    </subcellularLocation>
    <subcellularLocation>
        <location>Chromosome</location>
    </subcellularLocation>
</comment>
<comment type="developmental stage">
    <text>Expressed during S phase, then expression strongly decreases as cell division slows down during the process of differentiation.</text>
</comment>
<comment type="domain">
    <text evidence="3">Specific interaction of trimethylated form at 'Lys-36' (H3.3K36me3) with ZMYND11 is mediated by the encapsulation of Ser-32 residue with a composite pocket formed by the tandem bromo-PWWP domains (By similarity). Interacts with ZMYND11; when trimethylated at 'Lys-36' (H3.3K36me3).</text>
</comment>
<comment type="PTM">
    <text evidence="3">Acetylation is generally linked to gene activation. Acetylation on Lys-19 (H3K18ac) and Lys-24 (H3K24ac) favors methylation at Arg-18 (H3R17me). Acetylation at Lys-123 (H3K122ac) by EP300/p300 plays a central role in chromatin structure: localizes at the surface of the histone octamer and stimulates transcription, possibly by promoting nucleosome instability (By similarity).</text>
</comment>
<comment type="PTM">
    <text evidence="3">Asymmetric dimethylation at Arg-18 (H3R17me2a) is linked to gene activation. Asymmetric dimethylation at Arg-3 (H3R2me2a) by PRMT6 is linked to gene repression and is mutually exclusive with H3 Lys-5 methylation (H3K4me2 and H3K4me3). H3R2me2a is present at the 3' of genes regardless of their transcription state and is enriched on inactive promoters, while it is absent on active promoters (By similarity).</text>
</comment>
<comment type="PTM">
    <text evidence="3">Specifically enriched in modifications associated with active chromatin such as methylation at Lys-5 (H3K4me), Lys-37 (H3K36me) and Lys-80 (H3K79me). Methylation at Lys-5 (H3K4me) facilitates subsequent acetylation of H3 and H4. Methylation at Lys-80 (H3K79me) is associated with DNA double-strand break (DSB) responses and is a specific target for TP53BP1. Methylation at Lys-10 (H3K9me) and Lys-28 (H3K27me) are linked to gene repression. Methylation at Lys-10 (H3K9me) is a specific target for HP1 proteins (CBX1, CBX3 and CBX5) and prevents subsequent phosphorylation at Ser-11 (H3S10ph) and acetylation of H3 and H4. Methylation at Lys-5 (H3K4me) and Lys-80 (H3K79me) require preliminary monoubiquitination of H2B at 'Lys-120' (By similarity).</text>
</comment>
<comment type="PTM">
    <text evidence="3">Phosphorylated at Thr-4 (H3T3ph) by VRK1 (By similarity). Phosphorylated at Thr-4 (H3T3ph) by HASPIN during prophase and dephosphorylated during anaphase. Phosphorylation at Ser-11 (H3S10ph) by AURKB is crucial for chromosome condensation and cell-cycle progression during mitosis and meiosis. In addition phosphorylation at Ser-11 (H3S10ph) by RPS6KA4 and RPS6KA5 is important during interphase because it enables the transcription of genes following external stimulation, like mitogens, stress, growth factors or UV irradiation and result in the activation of genes, such as c-fos and c-jun. Phosphorylation at Ser-11 (H3S10ph), which is linked to gene activation, prevents methylation at Lys-10 (H3K9me) but facilitates acetylation of H3 and H4. Phosphorylation at Ser-11 (H3S10ph) by AURKB mediates the dissociation of HP1 proteins (CBX1, CBX3 and CBX5) from heterochromatin. Phosphorylation at Ser-11 (H3S10ph) is also an essential regulatory mechanism for neoplastic cell transformation. Phosphorylated at Ser-29 (H3S28ph) by MAP3K20 isoform 1, RPS6KA5 or AURKB during mitosis or upon ultraviolet B irradiation. Phosphorylation at Thr-7 (H3T6ph) by PRKCB is a specific tag for epigenetic transcriptional activation that prevents demethylation of Lys-5 (H3K4me) by LSD1/KDM1A. At centromeres, specifically phosphorylated at Thr-12 (H3T11ph) from prophase to early anaphase, by DAPK3 and PKN1. Phosphorylation at Thr-12 (H3T11ph) by PKN1 or isoform M2 of PKM (PKM2) is a specific tag for epigenetic transcriptional activation that promotes demethylation of Lys-10 (H3K9me) by KDM4C/JMJD2C. Phosphorylation at Tyr-42 (H3Y41ph) by JAK2 promotes exclusion of CBX5 (HP1 alpha) from chromatin. Phosphorylation on Ser-32 (H3S31ph) is specific to regions bordering centromeres in metaphase chromosomes.</text>
</comment>
<comment type="PTM">
    <text evidence="3">Monoubiquitinated by RAG1 in lymphoid cells, monoubiquitination is required for V(D)J recombination.</text>
</comment>
<comment type="PTM">
    <text evidence="3">Lysine deamination at Lys-5 (H3K4all) to form allysine only takes place on H3K4me3 and results in gene repression.</text>
</comment>
<comment type="PTM">
    <text evidence="2">Butyrylation of histones marks active promoters and competes with histone acetylation. It is present during late spermatogenesis.</text>
</comment>
<comment type="PTM">
    <text evidence="3">Succinylation at Lys-80 (H3K79succ) by KAT2A takes place with a maximum frequency around the transcription start sites of genes. It gives a specific tag for epigenetic transcription activation. Desuccinylation at Lys-123 (H3K122succ) by SIRT7 in response to DNA damage promotes chromatin condensation and double-strand breaks (DSBs) repair.</text>
</comment>
<comment type="PTM">
    <text evidence="1">Serine ADP-ribosylation constitutes the primary form of ADP-ribosylation of proteins in response to DNA damage. Serine ADP-ribosylation at Ser-11 (H3S10ADPr) is mutually exclusive with phosphorylation at Ser-11 (H3S10ph) and impairs acetylation at Lys-10 (H3K9ac).</text>
</comment>
<comment type="PTM">
    <text evidence="3">Serotonylated by TGM2 at Gln-6 (H3Q5ser) during serotonergic neuron differentiation (By similarity). H3Q5ser is associated with trimethylation of Lys-5 (H3K4me3) and enhances general transcription factor IID (TFIID) complex-binding to H3K4me3, thereby facilitating transcription (By similarity).</text>
</comment>
<comment type="PTM">
    <text evidence="3 5">Dopaminylated by TGM2 at Gln-6 (H3Q5dop) in ventral tegmental area (VTA) neurons (By similarity). H3Q5dop mediates neurotransmission-independent role of nuclear dopamine by regulating relapse-related transcriptional plasticity in the reward system (By similarity).</text>
</comment>
<comment type="PTM">
    <text evidence="3">Lactylated in macrophages by EP300/P300 by using lactoyl-CoA directly derived from endogenous or exogenous lactate, leading to stimulates gene transcription.</text>
</comment>
<comment type="similarity">
    <text evidence="7">Belongs to the histone H3 family.</text>
</comment>
<name>H33_CHICK</name>
<feature type="initiator methionine" description="Removed" evidence="7">
    <location>
        <position position="1"/>
    </location>
</feature>
<feature type="chain" id="PRO_0000221261" description="Histone H3.3">
    <location>
        <begin position="2"/>
        <end position="136"/>
    </location>
</feature>
<feature type="region of interest" description="Disordered" evidence="6">
    <location>
        <begin position="1"/>
        <end position="43"/>
    </location>
</feature>
<feature type="site" description="Interaction with ZMYND11" evidence="3">
    <location>
        <position position="32"/>
    </location>
</feature>
<feature type="modified residue" description="Asymmetric dimethylarginine; by PRMT6" evidence="3">
    <location>
        <position position="3"/>
    </location>
</feature>
<feature type="modified residue" description="Phosphothreonine; by HASPIN and VRK1" evidence="3">
    <location>
        <position position="4"/>
    </location>
</feature>
<feature type="modified residue" description="Allysine; alternate" evidence="3">
    <location>
        <position position="5"/>
    </location>
</feature>
<feature type="modified residue" description="N6,N6,N6-trimethyllysine; alternate" evidence="3">
    <location>
        <position position="5"/>
    </location>
</feature>
<feature type="modified residue" description="N6,N6-dimethyllysine; alternate" evidence="3">
    <location>
        <position position="5"/>
    </location>
</feature>
<feature type="modified residue" description="N6-(2-hydroxyisobutyryl)lysine; alternate" evidence="1">
    <location>
        <position position="5"/>
    </location>
</feature>
<feature type="modified residue" description="N6-acetyllysine; alternate" evidence="3">
    <location>
        <position position="5"/>
    </location>
</feature>
<feature type="modified residue" description="N6-methyllysine; alternate" evidence="3">
    <location>
        <position position="5"/>
    </location>
</feature>
<feature type="modified residue" description="5-glutamyl dopamine; alternate" evidence="3">
    <location>
        <position position="6"/>
    </location>
</feature>
<feature type="modified residue" description="5-glutamyl serotonin; alternate" evidence="3">
    <location>
        <position position="6"/>
    </location>
</feature>
<feature type="modified residue" description="Phosphothreonine; by PKC" evidence="3">
    <location>
        <position position="7"/>
    </location>
</feature>
<feature type="modified residue" description="N6-(2-hydroxyisobutyryl)lysine; alternate" evidence="1">
    <location>
        <position position="10"/>
    </location>
</feature>
<feature type="modified residue" description="N6-lactoyllysine; alternate" evidence="3">
    <location>
        <position position="10"/>
    </location>
</feature>
<feature type="modified residue" description="N6-methylated lysine" evidence="3">
    <location>
        <position position="10"/>
    </location>
</feature>
<feature type="modified residue" description="ADP-ribosylserine; alternate" evidence="1">
    <location>
        <position position="11"/>
    </location>
</feature>
<feature type="modified residue" description="Phosphoserine; alternate; by AURKB, AURKC, RPS6KA3, RPS6KA4 and RPS6KA5" evidence="3">
    <location>
        <position position="11"/>
    </location>
</feature>
<feature type="modified residue" description="Phosphothreonine; by PKC" evidence="3">
    <location>
        <position position="12"/>
    </location>
</feature>
<feature type="modified residue" description="N6-(2-hydroxyisobutyryl)lysine; alternate" evidence="1">
    <location>
        <position position="15"/>
    </location>
</feature>
<feature type="modified residue" description="N6-acetyllysine" evidence="3">
    <location>
        <position position="15"/>
    </location>
</feature>
<feature type="modified residue" description="N6-glutaryllysine; alternate" evidence="3">
    <location>
        <position position="15"/>
    </location>
</feature>
<feature type="modified residue" description="N6-lactoyllysine; alternate" evidence="4">
    <location>
        <position position="15"/>
    </location>
</feature>
<feature type="modified residue" description="Asymmetric dimethylarginine" evidence="3">
    <location>
        <position position="18"/>
    </location>
</feature>
<feature type="modified residue" description="N6-(2-hydroxyisobutyryl)lysine; alternate" evidence="1">
    <location>
        <position position="19"/>
    </location>
</feature>
<feature type="modified residue" description="N6-acetyllysine; alternate" evidence="3">
    <location>
        <position position="19"/>
    </location>
</feature>
<feature type="modified residue" description="N6-butyryllysine; alternate" evidence="2">
    <location>
        <position position="19"/>
    </location>
</feature>
<feature type="modified residue" description="N6-glutaryllysine; alternate" evidence="3">
    <location>
        <position position="19"/>
    </location>
</feature>
<feature type="modified residue" description="N6-lactoyllysine; alternate" evidence="3">
    <location>
        <position position="19"/>
    </location>
</feature>
<feature type="modified residue" description="N6-methylated lysine; alternate" evidence="3">
    <location>
        <position position="19"/>
    </location>
</feature>
<feature type="modified residue" description="N6-(2-hydroxyisobutyryl)lysine; alternate" evidence="1">
    <location>
        <position position="24"/>
    </location>
</feature>
<feature type="modified residue" description="N6-acetyllysine" evidence="3">
    <location>
        <position position="24"/>
    </location>
</feature>
<feature type="modified residue" description="N6-butyryllysine; alternate" evidence="2">
    <location>
        <position position="24"/>
    </location>
</feature>
<feature type="modified residue" description="N6-glutaryllysine; alternate" evidence="3">
    <location>
        <position position="24"/>
    </location>
</feature>
<feature type="modified residue" description="N6-lactoyllysine; alternate" evidence="3">
    <location>
        <position position="24"/>
    </location>
</feature>
<feature type="modified residue" description="N6-(2-hydroxyisobutyryl)lysine; alternate" evidence="1">
    <location>
        <position position="28"/>
    </location>
</feature>
<feature type="modified residue" description="N6-acetyllysine; alternate" evidence="3">
    <location>
        <position position="28"/>
    </location>
</feature>
<feature type="modified residue" description="N6-glutaryllysine; alternate" evidence="3">
    <location>
        <position position="28"/>
    </location>
</feature>
<feature type="modified residue" description="N6-lactoyllysine; alternate" evidence="3">
    <location>
        <position position="28"/>
    </location>
</feature>
<feature type="modified residue" description="N6-methylated lysine; alternate" evidence="3">
    <location>
        <position position="28"/>
    </location>
</feature>
<feature type="modified residue" description="ADP-ribosylserine; alternate" evidence="1">
    <location>
        <position position="29"/>
    </location>
</feature>
<feature type="modified residue" description="Phosphoserine; alternate; by AURKB, AURKC and RPS6KA5" evidence="3">
    <location>
        <position position="29"/>
    </location>
</feature>
<feature type="modified residue" description="N6-(2-hydroxyisobutyryl)lysine; alternate" evidence="1">
    <location>
        <position position="37"/>
    </location>
</feature>
<feature type="modified residue" description="N6-acetyllysine; alternate" evidence="3">
    <location>
        <position position="37"/>
    </location>
</feature>
<feature type="modified residue" description="N6-methylated lysine; alternate" evidence="3">
    <location>
        <position position="37"/>
    </location>
</feature>
<feature type="modified residue" description="Phosphotyrosine" evidence="3">
    <location>
        <position position="42"/>
    </location>
</feature>
<feature type="modified residue" description="N6-(2-hydroxyisobutyryl)lysine; alternate" evidence="1">
    <location>
        <position position="57"/>
    </location>
</feature>
<feature type="modified residue" description="N6-glutaryllysine; alternate" evidence="3">
    <location>
        <position position="57"/>
    </location>
</feature>
<feature type="modified residue" description="N6-lactoyllysine; alternate" evidence="4">
    <location>
        <position position="57"/>
    </location>
</feature>
<feature type="modified residue" description="N6-succinyllysine; alternate" evidence="4">
    <location>
        <position position="57"/>
    </location>
</feature>
<feature type="modified residue" description="Phosphoserine" evidence="3">
    <location>
        <position position="58"/>
    </location>
</feature>
<feature type="modified residue" description="N6-(2-hydroxyisobutyryl)lysine; alternate" evidence="1">
    <location>
        <position position="65"/>
    </location>
</feature>
<feature type="modified residue" description="N6-methylated lysine" evidence="3">
    <location>
        <position position="65"/>
    </location>
</feature>
<feature type="modified residue" description="N6-(2-hydroxyisobutyryl)lysine; alternate" evidence="1">
    <location>
        <position position="80"/>
    </location>
</feature>
<feature type="modified residue" description="N6-glutaryllysine; alternate" evidence="3">
    <location>
        <position position="80"/>
    </location>
</feature>
<feature type="modified residue" description="N6-lactoyllysine; alternate" evidence="3">
    <location>
        <position position="80"/>
    </location>
</feature>
<feature type="modified residue" description="N6-methylated lysine" evidence="3">
    <location>
        <position position="80"/>
    </location>
</feature>
<feature type="modified residue" description="N6-succinyllysine; alternate" evidence="4">
    <location>
        <position position="80"/>
    </location>
</feature>
<feature type="modified residue" description="Phosphothreonine" evidence="3">
    <location>
        <position position="81"/>
    </location>
</feature>
<feature type="modified residue" description="N6-acetyllysine; alternate" evidence="3">
    <location>
        <position position="116"/>
    </location>
</feature>
<feature type="modified residue" description="N6-glutaryllysine; alternate" evidence="3">
    <location>
        <position position="116"/>
    </location>
</feature>
<feature type="modified residue" description="N6-(2-hydroxyisobutyryl)lysine; alternate" evidence="1">
    <location>
        <position position="123"/>
    </location>
</feature>
<feature type="modified residue" description="N6-acetyllysine; alternate" evidence="3">
    <location>
        <position position="123"/>
    </location>
</feature>
<feature type="modified residue" description="N6-glutaryllysine; alternate" evidence="3">
    <location>
        <position position="123"/>
    </location>
</feature>
<feature type="modified residue" description="N6-methyllysine; alternate" evidence="3">
    <location>
        <position position="123"/>
    </location>
</feature>
<feature type="modified residue" description="N6-succinyllysine; alternate" evidence="3">
    <location>
        <position position="123"/>
    </location>
</feature>
<feature type="strand" evidence="8">
    <location>
        <begin position="24"/>
        <end position="28"/>
    </location>
</feature>